<organism>
    <name type="scientific">Human papillomavirus 13</name>
    <dbReference type="NCBI Taxonomy" id="10573"/>
    <lineage>
        <taxon>Viruses</taxon>
        <taxon>Monodnaviria</taxon>
        <taxon>Shotokuvirae</taxon>
        <taxon>Cossaviricota</taxon>
        <taxon>Papovaviricetes</taxon>
        <taxon>Zurhausenvirales</taxon>
        <taxon>Papillomaviridae</taxon>
        <taxon>Firstpapillomavirinae</taxon>
        <taxon>Alphapapillomavirus</taxon>
        <taxon>Alphapapillomavirus 10</taxon>
    </lineage>
</organism>
<name>VE8E2_HPV13</name>
<protein>
    <recommendedName>
        <fullName>Protein E8^E2C</fullName>
    </recommendedName>
</protein>
<sequence>MAILKWKLKRSTVQEVSIAGPASYSTTTSTQASTAVSCSASEECVQAPPCKRQRGPSRPIGNPQNTQSIVCVTDYDTLDSANNNINVNHYNNNKGRDNSYCAATPIVQLQGDSNCLKCFRYRLHEKYKDLFLLASSTWHWTAPNNSQKHALVTLTYVNEQQRQDFLKTVKIPPTITHKLGFMSLQLL</sequence>
<feature type="chain" id="PRO_0000438751" description="Protein E8^E2C">
    <location>
        <begin position="1"/>
        <end position="187"/>
    </location>
</feature>
<accession>P0DOW7</accession>
<organismHost>
    <name type="scientific">Homo sapiens</name>
    <name type="common">Human</name>
    <dbReference type="NCBI Taxonomy" id="9606"/>
</organismHost>
<proteinExistence type="inferred from homology"/>
<dbReference type="EMBL" id="X62843">
    <property type="status" value="NOT_ANNOTATED_CDS"/>
    <property type="molecule type" value="Genomic_DNA"/>
</dbReference>
<dbReference type="SMR" id="P0DOW7"/>
<dbReference type="Proteomes" id="UP000009107">
    <property type="component" value="Genome"/>
</dbReference>
<dbReference type="GO" id="GO:0042025">
    <property type="term" value="C:host cell nucleus"/>
    <property type="evidence" value="ECO:0007669"/>
    <property type="project" value="UniProtKB-SubCell"/>
</dbReference>
<dbReference type="GO" id="GO:0003677">
    <property type="term" value="F:DNA binding"/>
    <property type="evidence" value="ECO:0007669"/>
    <property type="project" value="InterPro"/>
</dbReference>
<dbReference type="GO" id="GO:0003700">
    <property type="term" value="F:DNA-binding transcription factor activity"/>
    <property type="evidence" value="ECO:0007669"/>
    <property type="project" value="InterPro"/>
</dbReference>
<dbReference type="GO" id="GO:0006275">
    <property type="term" value="P:regulation of DNA replication"/>
    <property type="evidence" value="ECO:0007669"/>
    <property type="project" value="InterPro"/>
</dbReference>
<dbReference type="Gene3D" id="3.30.70.330">
    <property type="match status" value="1"/>
</dbReference>
<dbReference type="InterPro" id="IPR035975">
    <property type="entry name" value="E2/EBNA1_C_sf"/>
</dbReference>
<dbReference type="InterPro" id="IPR012677">
    <property type="entry name" value="Nucleotide-bd_a/b_plait_sf"/>
</dbReference>
<dbReference type="InterPro" id="IPR000427">
    <property type="entry name" value="Papillomavirus_E2_C"/>
</dbReference>
<dbReference type="Pfam" id="PF00511">
    <property type="entry name" value="PPV_E2_C"/>
    <property type="match status" value="1"/>
</dbReference>
<dbReference type="SUPFAM" id="SSF54957">
    <property type="entry name" value="Viral DNA-binding domain"/>
    <property type="match status" value="1"/>
</dbReference>
<evidence type="ECO:0000250" key="1">
    <source>
        <dbReference type="UniProtKB" id="P0DKA0"/>
    </source>
</evidence>
<evidence type="ECO:0000305" key="2"/>
<keyword id="KW-1048">Host nucleus</keyword>
<comment type="function">
    <text evidence="1">Plays a role in limiting the replication of viral DNA in keratinocytes. Recruits the host NCoR/SMRT complex to viral replication foci to mediate repression of both viral replication and transcription.</text>
</comment>
<comment type="subcellular location">
    <subcellularLocation>
        <location evidence="1">Host nucleus</location>
    </subcellularLocation>
</comment>
<comment type="similarity">
    <text evidence="2">Belongs to the papillomaviridae E8^E2C protein family.</text>
</comment>
<reference key="1">
    <citation type="journal article" date="1992" name="Virology">
        <title>Human papillomavirus type 13 and pygmy chimpanzee papillomavirus type 1: comparison of the genome organizations.</title>
        <authorList>
            <person name="van Ranst M."/>
            <person name="Fuse A."/>
            <person name="Fiten P."/>
            <person name="Beuken E."/>
            <person name="Pfister H."/>
            <person name="Burk R.D."/>
            <person name="Opdenakker G."/>
        </authorList>
    </citation>
    <scope>NUCLEOTIDE SEQUENCE [GENOMIC DNA]</scope>
</reference>